<reference key="1">
    <citation type="journal article" date="2007" name="J. Bacteriol.">
        <title>The genome sequence of avian pathogenic Escherichia coli strain O1:K1:H7 shares strong similarities with human extraintestinal pathogenic E. coli genomes.</title>
        <authorList>
            <person name="Johnson T.J."/>
            <person name="Kariyawasam S."/>
            <person name="Wannemuehler Y."/>
            <person name="Mangiamele P."/>
            <person name="Johnson S.J."/>
            <person name="Doetkott C."/>
            <person name="Skyberg J.A."/>
            <person name="Lynne A.M."/>
            <person name="Johnson J.R."/>
            <person name="Nolan L.K."/>
        </authorList>
    </citation>
    <scope>NUCLEOTIDE SEQUENCE [LARGE SCALE GENOMIC DNA]</scope>
</reference>
<gene>
    <name evidence="1" type="primary">yjjB</name>
    <name type="ordered locus">Ecok1_43820</name>
    <name type="ORF">APECO1_2061</name>
</gene>
<name>YJJB_ECOK1</name>
<sequence>MGVIEFLLALAQDMILAAIPAVGFAMVFNVPVRALRWCALLGAIGHGSRMILMTSGLNIEWSTFMASMLVGTIGIQWSRWYLAHPKVFTVAAVIPMFPGISAYTAMISAVKISQLGYSEPLMITLLTNFLTASSIVGALSIGLSIPGLWLYRKRPRV</sequence>
<proteinExistence type="inferred from homology"/>
<dbReference type="EMBL" id="CP000468">
    <property type="protein sequence ID" value="ABJ03876.1"/>
    <property type="molecule type" value="Genomic_DNA"/>
</dbReference>
<dbReference type="RefSeq" id="WP_000538188.1">
    <property type="nucleotide sequence ID" value="NZ_CADILS010000100.1"/>
</dbReference>
<dbReference type="KEGG" id="ecv:APECO1_2061"/>
<dbReference type="HOGENOM" id="CLU_117642_1_0_6"/>
<dbReference type="Proteomes" id="UP000008216">
    <property type="component" value="Chromosome"/>
</dbReference>
<dbReference type="GO" id="GO:0005886">
    <property type="term" value="C:plasma membrane"/>
    <property type="evidence" value="ECO:0007669"/>
    <property type="project" value="UniProtKB-SubCell"/>
</dbReference>
<dbReference type="GO" id="GO:0015744">
    <property type="term" value="P:succinate transport"/>
    <property type="evidence" value="ECO:0007669"/>
    <property type="project" value="UniProtKB-UniRule"/>
</dbReference>
<dbReference type="HAMAP" id="MF_01191">
    <property type="entry name" value="YjjB"/>
    <property type="match status" value="1"/>
</dbReference>
<dbReference type="InterPro" id="IPR024528">
    <property type="entry name" value="ThrE_2"/>
</dbReference>
<dbReference type="InterPro" id="IPR050539">
    <property type="entry name" value="ThrE_Dicarb/AminoAcid_Exp"/>
</dbReference>
<dbReference type="InterPro" id="IPR020914">
    <property type="entry name" value="YjjB"/>
</dbReference>
<dbReference type="NCBIfam" id="NF007391">
    <property type="entry name" value="PRK09917.1"/>
    <property type="match status" value="1"/>
</dbReference>
<dbReference type="PANTHER" id="PTHR34390:SF1">
    <property type="entry name" value="SUCCINATE TRANSPORTER SUBUNIT YJJB-RELATED"/>
    <property type="match status" value="1"/>
</dbReference>
<dbReference type="PANTHER" id="PTHR34390">
    <property type="entry name" value="UPF0442 PROTEIN YJJB-RELATED"/>
    <property type="match status" value="1"/>
</dbReference>
<dbReference type="Pfam" id="PF12821">
    <property type="entry name" value="ThrE_2"/>
    <property type="match status" value="1"/>
</dbReference>
<comment type="function">
    <text evidence="1">Involved in succinate export with YjjP. Both proteins are required for export.</text>
</comment>
<comment type="subunit">
    <text evidence="1">The transporter is composed of YjjB and YjjP.</text>
</comment>
<comment type="subcellular location">
    <subcellularLocation>
        <location evidence="1">Cell inner membrane</location>
        <topology evidence="1">Multi-pass membrane protein</topology>
    </subcellularLocation>
</comment>
<comment type="similarity">
    <text evidence="1">Belongs to the ThrE exporter (TC 2.A.79) family.</text>
</comment>
<feature type="chain" id="PRO_0000293670" description="Probable succinate transporter subunit YjjB">
    <location>
        <begin position="1"/>
        <end position="157"/>
    </location>
</feature>
<feature type="transmembrane region" description="Helical" evidence="1">
    <location>
        <begin position="8"/>
        <end position="28"/>
    </location>
</feature>
<feature type="transmembrane region" description="Helical" evidence="1">
    <location>
        <begin position="50"/>
        <end position="70"/>
    </location>
</feature>
<feature type="transmembrane region" description="Helical" evidence="1">
    <location>
        <begin position="87"/>
        <end position="107"/>
    </location>
</feature>
<feature type="transmembrane region" description="Helical" evidence="1">
    <location>
        <begin position="129"/>
        <end position="149"/>
    </location>
</feature>
<keyword id="KW-0997">Cell inner membrane</keyword>
<keyword id="KW-1003">Cell membrane</keyword>
<keyword id="KW-0472">Membrane</keyword>
<keyword id="KW-1185">Reference proteome</keyword>
<keyword id="KW-0812">Transmembrane</keyword>
<keyword id="KW-1133">Transmembrane helix</keyword>
<keyword id="KW-0813">Transport</keyword>
<accession>A1AJN6</accession>
<evidence type="ECO:0000255" key="1">
    <source>
        <dbReference type="HAMAP-Rule" id="MF_01191"/>
    </source>
</evidence>
<protein>
    <recommendedName>
        <fullName evidence="1">Probable succinate transporter subunit YjjB</fullName>
    </recommendedName>
</protein>
<organism>
    <name type="scientific">Escherichia coli O1:K1 / APEC</name>
    <dbReference type="NCBI Taxonomy" id="405955"/>
    <lineage>
        <taxon>Bacteria</taxon>
        <taxon>Pseudomonadati</taxon>
        <taxon>Pseudomonadota</taxon>
        <taxon>Gammaproteobacteria</taxon>
        <taxon>Enterobacterales</taxon>
        <taxon>Enterobacteriaceae</taxon>
        <taxon>Escherichia</taxon>
    </lineage>
</organism>